<reference key="1">
    <citation type="journal article" date="1994" name="Infect. Immun.">
        <title>Cloning and B-cell-epitope mapping of MPT64 from Mycobacterium tuberculosis H37Rv.</title>
        <authorList>
            <person name="Oettinger T."/>
            <person name="Andersen A.B."/>
        </authorList>
    </citation>
    <scope>NUCLEOTIDE SEQUENCE [GENOMIC DNA]</scope>
    <source>
        <strain>H37Rv / 27294</strain>
    </source>
</reference>
<reference key="2">
    <citation type="journal article" date="1997" name="Infect. Immun.">
        <title>High-level heterologous expression and secretion in rapidly growing nonpathogenic mycobacteria of four major Mycobacterium tuberculosis extracellular proteins considered to be leading vaccine candidates and drug targets.</title>
        <authorList>
            <person name="Harth G."/>
            <person name="Lee B.Y."/>
            <person name="Horwitz M.A."/>
        </authorList>
    </citation>
    <scope>NUCLEOTIDE SEQUENCE [GENOMIC DNA]</scope>
    <source>
        <strain>ATCC 35801 / TMC 107 / Erdman</strain>
    </source>
</reference>
<reference key="3">
    <citation type="journal article" date="1998" name="Nature">
        <title>Deciphering the biology of Mycobacterium tuberculosis from the complete genome sequence.</title>
        <authorList>
            <person name="Cole S.T."/>
            <person name="Brosch R."/>
            <person name="Parkhill J."/>
            <person name="Garnier T."/>
            <person name="Churcher C.M."/>
            <person name="Harris D.E."/>
            <person name="Gordon S.V."/>
            <person name="Eiglmeier K."/>
            <person name="Gas S."/>
            <person name="Barry C.E. III"/>
            <person name="Tekaia F."/>
            <person name="Badcock K."/>
            <person name="Basham D."/>
            <person name="Brown D."/>
            <person name="Chillingworth T."/>
            <person name="Connor R."/>
            <person name="Davies R.M."/>
            <person name="Devlin K."/>
            <person name="Feltwell T."/>
            <person name="Gentles S."/>
            <person name="Hamlin N."/>
            <person name="Holroyd S."/>
            <person name="Hornsby T."/>
            <person name="Jagels K."/>
            <person name="Krogh A."/>
            <person name="McLean J."/>
            <person name="Moule S."/>
            <person name="Murphy L.D."/>
            <person name="Oliver S."/>
            <person name="Osborne J."/>
            <person name="Quail M.A."/>
            <person name="Rajandream M.A."/>
            <person name="Rogers J."/>
            <person name="Rutter S."/>
            <person name="Seeger K."/>
            <person name="Skelton S."/>
            <person name="Squares S."/>
            <person name="Squares R."/>
            <person name="Sulston J.E."/>
            <person name="Taylor K."/>
            <person name="Whitehead S."/>
            <person name="Barrell B.G."/>
        </authorList>
    </citation>
    <scope>NUCLEOTIDE SEQUENCE [LARGE SCALE GENOMIC DNA]</scope>
    <source>
        <strain>ATCC 25618 / H37Rv</strain>
    </source>
</reference>
<reference key="4">
    <citation type="journal article" date="1992" name="Scand. J. Immunol.">
        <title>A family of cross-reacting proteins secreted by Mycobacterium tuberculosis.</title>
        <authorList>
            <person name="Wiker H.G."/>
            <person name="Nagai S."/>
            <person name="Harboe M."/>
            <person name="Ljungqvist L."/>
        </authorList>
    </citation>
    <scope>PROTEIN SEQUENCE OF 24-64; 89-119 AND 137-164</scope>
</reference>
<reference key="5">
    <citation type="journal article" date="2011" name="Mol. Cell. Proteomics">
        <title>Proteogenomic analysis of Mycobacterium tuberculosis by high resolution mass spectrometry.</title>
        <authorList>
            <person name="Kelkar D.S."/>
            <person name="Kumar D."/>
            <person name="Kumar P."/>
            <person name="Balakrishnan L."/>
            <person name="Muthusamy B."/>
            <person name="Yadav A.K."/>
            <person name="Shrivastava P."/>
            <person name="Marimuthu A."/>
            <person name="Anand S."/>
            <person name="Sundaram H."/>
            <person name="Kingsbury R."/>
            <person name="Harsha H.C."/>
            <person name="Nair B."/>
            <person name="Prasad T.S."/>
            <person name="Chauhan D.S."/>
            <person name="Katoch K."/>
            <person name="Katoch V.M."/>
            <person name="Kumar P."/>
            <person name="Chaerkady R."/>
            <person name="Ramachandran S."/>
            <person name="Dash D."/>
            <person name="Pandey A."/>
        </authorList>
    </citation>
    <scope>IDENTIFICATION BY MASS SPECTROMETRY [LARGE SCALE ANALYSIS]</scope>
    <source>
        <strain>ATCC 25618 / H37Rv</strain>
    </source>
</reference>
<sequence length="228" mass="24855">MRIKIFMLVTAVVLLCCSGVATAAPKTYCEELKGTDTGQACQIQMSDPAYNINISLPSYYPDQKSLENYIAQTRDKFLSAATSSTPREAPYELNITSATYQSAIPPRGTQAVVLKVYQNAGGTHPTTTYKAFDWDQAYRKPITYDTLWQADTDPLPVVFPIVQGELSKQTGQQVSIAPNAGLDPVNYQNFAVTNDGVIFFFNPGELLPEAAGPTQVLVPRSAIDSMLA</sequence>
<name>MP64_MYCTU</name>
<feature type="signal peptide" evidence="1">
    <location>
        <begin position="1"/>
        <end position="23"/>
    </location>
</feature>
<feature type="chain" id="PRO_0000021738" description="Immunogenic protein MPT64">
    <location>
        <begin position="24"/>
        <end position="228"/>
    </location>
</feature>
<feature type="helix" evidence="3">
    <location>
        <begin position="28"/>
        <end position="31"/>
    </location>
</feature>
<feature type="strand" evidence="3">
    <location>
        <begin position="41"/>
        <end position="47"/>
    </location>
</feature>
<feature type="strand" evidence="3">
    <location>
        <begin position="50"/>
        <end position="55"/>
    </location>
</feature>
<feature type="turn" evidence="3">
    <location>
        <begin position="61"/>
        <end position="63"/>
    </location>
</feature>
<feature type="helix" evidence="3">
    <location>
        <begin position="64"/>
        <end position="81"/>
    </location>
</feature>
<feature type="strand" evidence="3">
    <location>
        <begin position="88"/>
        <end position="90"/>
    </location>
</feature>
<feature type="strand" evidence="3">
    <location>
        <begin position="92"/>
        <end position="101"/>
    </location>
</feature>
<feature type="strand" evidence="3">
    <location>
        <begin position="109"/>
        <end position="120"/>
    </location>
</feature>
<feature type="turn" evidence="3">
    <location>
        <begin position="121"/>
        <end position="123"/>
    </location>
</feature>
<feature type="strand" evidence="3">
    <location>
        <begin position="127"/>
        <end position="135"/>
    </location>
</feature>
<feature type="turn" evidence="3">
    <location>
        <begin position="136"/>
        <end position="139"/>
    </location>
</feature>
<feature type="turn" evidence="3">
    <location>
        <begin position="144"/>
        <end position="146"/>
    </location>
</feature>
<feature type="helix" evidence="3">
    <location>
        <begin position="159"/>
        <end position="169"/>
    </location>
</feature>
<feature type="turn" evidence="3">
    <location>
        <begin position="179"/>
        <end position="181"/>
    </location>
</feature>
<feature type="turn" evidence="3">
    <location>
        <begin position="185"/>
        <end position="187"/>
    </location>
</feature>
<feature type="strand" evidence="3">
    <location>
        <begin position="191"/>
        <end position="193"/>
    </location>
</feature>
<feature type="strand" evidence="3">
    <location>
        <begin position="196"/>
        <end position="201"/>
    </location>
</feature>
<feature type="strand" evidence="3">
    <location>
        <begin position="204"/>
        <end position="207"/>
    </location>
</feature>
<feature type="turn" evidence="3">
    <location>
        <begin position="209"/>
        <end position="211"/>
    </location>
</feature>
<feature type="strand" evidence="3">
    <location>
        <begin position="214"/>
        <end position="218"/>
    </location>
</feature>
<feature type="helix" evidence="3">
    <location>
        <begin position="220"/>
        <end position="223"/>
    </location>
</feature>
<feature type="turn" evidence="3">
    <location>
        <begin position="224"/>
        <end position="226"/>
    </location>
</feature>
<organism>
    <name type="scientific">Mycobacterium tuberculosis (strain ATCC 25618 / H37Rv)</name>
    <dbReference type="NCBI Taxonomy" id="83332"/>
    <lineage>
        <taxon>Bacteria</taxon>
        <taxon>Bacillati</taxon>
        <taxon>Actinomycetota</taxon>
        <taxon>Actinomycetes</taxon>
        <taxon>Mycobacteriales</taxon>
        <taxon>Mycobacteriaceae</taxon>
        <taxon>Mycobacterium</taxon>
        <taxon>Mycobacterium tuberculosis complex</taxon>
    </lineage>
</organism>
<gene>
    <name type="primary">mpt64</name>
    <name type="ordered locus">Rv1980c</name>
    <name type="ORF">MTCY39.39</name>
</gene>
<proteinExistence type="evidence at protein level"/>
<accession>P9WIN9</accession>
<accession>L0TB55</accession>
<accession>P0A5Q4</accession>
<accession>P19996</accession>
<keyword id="KW-0002">3D-structure</keyword>
<keyword id="KW-0903">Direct protein sequencing</keyword>
<keyword id="KW-1185">Reference proteome</keyword>
<keyword id="KW-0964">Secreted</keyword>
<keyword id="KW-0732">Signal</keyword>
<evidence type="ECO:0000269" key="1">
    <source>
    </source>
</evidence>
<evidence type="ECO:0000305" key="2"/>
<evidence type="ECO:0007829" key="3">
    <source>
        <dbReference type="PDB" id="2HHI"/>
    </source>
</evidence>
<protein>
    <recommendedName>
        <fullName>Immunogenic protein MPT64</fullName>
    </recommendedName>
    <alternativeName>
        <fullName>Antigen MPT64</fullName>
    </alternativeName>
</protein>
<dbReference type="EMBL" id="X75361">
    <property type="protein sequence ID" value="CAA53143.1"/>
    <property type="molecule type" value="mRNA"/>
</dbReference>
<dbReference type="EMBL" id="U82235">
    <property type="protein sequence ID" value="AAB61538.1"/>
    <property type="molecule type" value="Genomic_DNA"/>
</dbReference>
<dbReference type="EMBL" id="AL123456">
    <property type="protein sequence ID" value="CCP44749.1"/>
    <property type="molecule type" value="Genomic_DNA"/>
</dbReference>
<dbReference type="PIR" id="B70756">
    <property type="entry name" value="B70756"/>
</dbReference>
<dbReference type="RefSeq" id="NP_216496.1">
    <property type="nucleotide sequence ID" value="NC_000962.3"/>
</dbReference>
<dbReference type="RefSeq" id="WP_003409954.1">
    <property type="nucleotide sequence ID" value="NZ_NVQJ01000048.1"/>
</dbReference>
<dbReference type="PDB" id="2HHI">
    <property type="method" value="NMR"/>
    <property type="chains" value="A=25-228"/>
</dbReference>
<dbReference type="PDBsum" id="2HHI"/>
<dbReference type="SMR" id="P9WIN9"/>
<dbReference type="STRING" id="83332.Rv1980c"/>
<dbReference type="PaxDb" id="83332-Rv1980c"/>
<dbReference type="DNASU" id="885925"/>
<dbReference type="GeneID" id="885925"/>
<dbReference type="KEGG" id="mtu:Rv1980c"/>
<dbReference type="KEGG" id="mtv:RVBD_1980c"/>
<dbReference type="TubercuList" id="Rv1980c"/>
<dbReference type="eggNOG" id="ENOG502ZA8P">
    <property type="taxonomic scope" value="Bacteria"/>
</dbReference>
<dbReference type="InParanoid" id="P9WIN9"/>
<dbReference type="OrthoDB" id="4696640at2"/>
<dbReference type="PhylomeDB" id="P9WIN9"/>
<dbReference type="EvolutionaryTrace" id="P9WIN9"/>
<dbReference type="Proteomes" id="UP000001584">
    <property type="component" value="Chromosome"/>
</dbReference>
<dbReference type="GO" id="GO:0005576">
    <property type="term" value="C:extracellular region"/>
    <property type="evidence" value="ECO:0000314"/>
    <property type="project" value="MTBBASE"/>
</dbReference>
<dbReference type="GO" id="GO:0009274">
    <property type="term" value="C:peptidoglycan-based cell wall"/>
    <property type="evidence" value="ECO:0007005"/>
    <property type="project" value="MTBBASE"/>
</dbReference>
<dbReference type="GO" id="GO:0035375">
    <property type="term" value="F:zymogen binding"/>
    <property type="evidence" value="ECO:0000353"/>
    <property type="project" value="CAFA"/>
</dbReference>
<dbReference type="GO" id="GO:0009267">
    <property type="term" value="P:cellular response to starvation"/>
    <property type="evidence" value="ECO:0000270"/>
    <property type="project" value="MTBBASE"/>
</dbReference>
<dbReference type="Gene3D" id="3.30.565.40">
    <property type="entry name" value="Fervidobacterium nodosum Rt17-B1 like"/>
    <property type="match status" value="1"/>
</dbReference>
<dbReference type="Gene3D" id="3.90.640.20">
    <property type="entry name" value="Heat-shock cognate protein, ATPase"/>
    <property type="match status" value="1"/>
</dbReference>
<dbReference type="InterPro" id="IPR021729">
    <property type="entry name" value="DUF3298"/>
</dbReference>
<dbReference type="InterPro" id="IPR053421">
    <property type="entry name" value="Esterase_Immunogenic_RsiV"/>
</dbReference>
<dbReference type="InterPro" id="IPR037126">
    <property type="entry name" value="PdaC/RsiV-like_sf"/>
</dbReference>
<dbReference type="NCBIfam" id="NF043047">
    <property type="entry name" value="EstaseRv3036c"/>
    <property type="match status" value="1"/>
</dbReference>
<dbReference type="Pfam" id="PF11738">
    <property type="entry name" value="DUF3298"/>
    <property type="match status" value="1"/>
</dbReference>
<comment type="subcellular location">
    <subcellularLocation>
        <location>Secreted</location>
    </subcellularLocation>
</comment>
<comment type="similarity">
    <text evidence="2">Belongs to the RsiV family.</text>
</comment>